<reference key="1">
    <citation type="journal article" date="2010" name="Science">
        <title>The genome of the Western clawed frog Xenopus tropicalis.</title>
        <authorList>
            <person name="Hellsten U."/>
            <person name="Harland R.M."/>
            <person name="Gilchrist M.J."/>
            <person name="Hendrix D."/>
            <person name="Jurka J."/>
            <person name="Kapitonov V."/>
            <person name="Ovcharenko I."/>
            <person name="Putnam N.H."/>
            <person name="Shu S."/>
            <person name="Taher L."/>
            <person name="Blitz I.L."/>
            <person name="Blumberg B."/>
            <person name="Dichmann D.S."/>
            <person name="Dubchak I."/>
            <person name="Amaya E."/>
            <person name="Detter J.C."/>
            <person name="Fletcher R."/>
            <person name="Gerhard D.S."/>
            <person name="Goodstein D."/>
            <person name="Graves T."/>
            <person name="Grigoriev I.V."/>
            <person name="Grimwood J."/>
            <person name="Kawashima T."/>
            <person name="Lindquist E."/>
            <person name="Lucas S.M."/>
            <person name="Mead P.E."/>
            <person name="Mitros T."/>
            <person name="Ogino H."/>
            <person name="Ohta Y."/>
            <person name="Poliakov A.V."/>
            <person name="Pollet N."/>
            <person name="Robert J."/>
            <person name="Salamov A."/>
            <person name="Sater A.K."/>
            <person name="Schmutz J."/>
            <person name="Terry A."/>
            <person name="Vize P.D."/>
            <person name="Warren W.C."/>
            <person name="Wells D."/>
            <person name="Wills A."/>
            <person name="Wilson R.K."/>
            <person name="Zimmerman L.B."/>
            <person name="Zorn A.M."/>
            <person name="Grainger R."/>
            <person name="Grammer T."/>
            <person name="Khokha M.K."/>
            <person name="Richardson P.M."/>
            <person name="Rokhsar D.S."/>
        </authorList>
    </citation>
    <scope>NUCLEOTIDE SEQUENCE [LARGE SCALE GENOMIC DNA]</scope>
</reference>
<sequence length="515" mass="55625">MADYLISGGTSYVPDDGLTAQQLFGAGDGLTYNDFLILPGYIDFTADQVDLTSALTKKITLKTPMVSSPMDTVTEASMAIAMALTGGIGIMHHNCTPEFQANEVRKVKKYEQGFITDPVVLSPKHRVRDVFEAKARHGFCGIPITENGKMGSKLAGIISSRDIDFLKSEEHDLALSEIMTRREDLVVAPAGVTLKEANEILQRSKKGKLLPIVNGNDELVAIIARTDLKKNRDYPLASKDAKKQLLCGAAIGTHEDDKYRLDLLVQAGVDAVVLDSSQGNSIFQINMIKFIKEKYQDLQVIAGNVVTAAQAKNLIDAGADALRVGMGSGSICITQEVLACGRPQATAVYKVSEYARRFGVPVIADGGIQTVGHIAKALALGASTVMMGSLLAATTEAPGEYFFSDGIRLKKYRGMGSLDAMDKNVSSQKRYFSEADKIKVAQGVSGAVQDKGSIHKFIPYLIAGIQHSCQDIGAKSLTQVRAMMYSGELKFEKRTMSAQVEGGVHGLHSYEKRLF</sequence>
<comment type="function">
    <text evidence="1">Catalyzes the conversion of inosine 5'-phosphate (IMP) to xanthosine 5'-phosphate (XMP), the first committed and rate-limiting step in the de novo synthesis of guanine nucleotides, and therefore plays an important role in the regulation of cell growth.</text>
</comment>
<comment type="catalytic activity">
    <reaction evidence="1">
        <text>IMP + NAD(+) + H2O = XMP + NADH + H(+)</text>
        <dbReference type="Rhea" id="RHEA:11708"/>
        <dbReference type="ChEBI" id="CHEBI:15377"/>
        <dbReference type="ChEBI" id="CHEBI:15378"/>
        <dbReference type="ChEBI" id="CHEBI:57464"/>
        <dbReference type="ChEBI" id="CHEBI:57540"/>
        <dbReference type="ChEBI" id="CHEBI:57945"/>
        <dbReference type="ChEBI" id="CHEBI:58053"/>
        <dbReference type="EC" id="1.1.1.205"/>
    </reaction>
</comment>
<comment type="cofactor">
    <cofactor evidence="2">
        <name>K(+)</name>
        <dbReference type="ChEBI" id="CHEBI:29103"/>
    </cofactor>
</comment>
<comment type="activity regulation">
    <text evidence="2">Mycophenolic acid (MPA) is a non-competitive inhibitor that prevents formation of the closed enzyme conformation by binding to the same site as the amobile flap. In contrast, mizoribine monophosphate (MZP) is a competitive inhibitor that induces the closed conformation. MPA is a potent inhibitor of mammalian IMPDHs but a poor inhibitor of the bacterial enzymes. MZP is a more potent inhibitor of bacterial IMPDH.</text>
</comment>
<comment type="pathway">
    <text evidence="1">Purine metabolism; XMP biosynthesis via de novo pathway; XMP from IMP: step 1/1.</text>
</comment>
<comment type="subunit">
    <text evidence="1">Homotetramer.</text>
</comment>
<comment type="subcellular location">
    <subcellularLocation>
        <location evidence="1">Cytoplasm</location>
    </subcellularLocation>
    <subcellularLocation>
        <location evidence="1">Nucleus</location>
    </subcellularLocation>
    <subcellularLocation>
        <location evidence="1">Cytoplasm</location>
        <location evidence="1">Cytosol</location>
    </subcellularLocation>
    <text evidence="1">Can form fiber-like subcellular structures termed 'cytoophidia' in response to intracellular guanine-nucleotide depletion.</text>
</comment>
<comment type="similarity">
    <text evidence="2">Belongs to the IMPDH/GMPR family.</text>
</comment>
<keyword id="KW-0129">CBS domain</keyword>
<keyword id="KW-0963">Cytoplasm</keyword>
<keyword id="KW-0332">GMP biosynthesis</keyword>
<keyword id="KW-0479">Metal-binding</keyword>
<keyword id="KW-0520">NAD</keyword>
<keyword id="KW-0539">Nucleus</keyword>
<keyword id="KW-0560">Oxidoreductase</keyword>
<keyword id="KW-0630">Potassium</keyword>
<keyword id="KW-0658">Purine biosynthesis</keyword>
<keyword id="KW-1185">Reference proteome</keyword>
<keyword id="KW-0677">Repeat</keyword>
<dbReference type="EC" id="1.1.1.205" evidence="1"/>
<dbReference type="EMBL" id="AAMC01018809">
    <property type="status" value="NOT_ANNOTATED_CDS"/>
    <property type="molecule type" value="Genomic_DNA"/>
</dbReference>
<dbReference type="SMR" id="F7CYY5"/>
<dbReference type="FunCoup" id="F7CYY5">
    <property type="interactions" value="2222"/>
</dbReference>
<dbReference type="STRING" id="8364.ENSXETP00000043519"/>
<dbReference type="PaxDb" id="8364-ENSXETP00000059998"/>
<dbReference type="eggNOG" id="KOG2550">
    <property type="taxonomic scope" value="Eukaryota"/>
</dbReference>
<dbReference type="HOGENOM" id="CLU_022552_2_1_1"/>
<dbReference type="InParanoid" id="F7CYY5"/>
<dbReference type="UniPathway" id="UPA00601">
    <property type="reaction ID" value="UER00295"/>
</dbReference>
<dbReference type="Proteomes" id="UP000008143">
    <property type="component" value="Unplaced"/>
</dbReference>
<dbReference type="GO" id="GO:0005829">
    <property type="term" value="C:cytosol"/>
    <property type="evidence" value="ECO:0000250"/>
    <property type="project" value="UniProtKB"/>
</dbReference>
<dbReference type="GO" id="GO:0005634">
    <property type="term" value="C:nucleus"/>
    <property type="evidence" value="ECO:0007669"/>
    <property type="project" value="UniProtKB-SubCell"/>
</dbReference>
<dbReference type="GO" id="GO:0003938">
    <property type="term" value="F:IMP dehydrogenase activity"/>
    <property type="evidence" value="ECO:0000250"/>
    <property type="project" value="UniProtKB"/>
</dbReference>
<dbReference type="GO" id="GO:0046872">
    <property type="term" value="F:metal ion binding"/>
    <property type="evidence" value="ECO:0007669"/>
    <property type="project" value="UniProtKB-UniRule"/>
</dbReference>
<dbReference type="GO" id="GO:0000166">
    <property type="term" value="F:nucleotide binding"/>
    <property type="evidence" value="ECO:0007669"/>
    <property type="project" value="UniProtKB-UniRule"/>
</dbReference>
<dbReference type="GO" id="GO:0006177">
    <property type="term" value="P:GMP biosynthetic process"/>
    <property type="evidence" value="ECO:0007669"/>
    <property type="project" value="UniProtKB-UniRule"/>
</dbReference>
<dbReference type="GO" id="GO:0006183">
    <property type="term" value="P:GTP biosynthetic process"/>
    <property type="evidence" value="ECO:0000250"/>
    <property type="project" value="UniProtKB"/>
</dbReference>
<dbReference type="CDD" id="cd04601">
    <property type="entry name" value="CBS_pair_IMPDH"/>
    <property type="match status" value="1"/>
</dbReference>
<dbReference type="CDD" id="cd00381">
    <property type="entry name" value="IMPDH"/>
    <property type="match status" value="1"/>
</dbReference>
<dbReference type="FunFam" id="3.20.20.70:FF:000007">
    <property type="entry name" value="Chromosome 19 SCAF14664, whole genome shotgun sequence"/>
    <property type="match status" value="1"/>
</dbReference>
<dbReference type="Gene3D" id="3.20.20.70">
    <property type="entry name" value="Aldolase class I"/>
    <property type="match status" value="1"/>
</dbReference>
<dbReference type="HAMAP" id="MF_01964">
    <property type="entry name" value="IMPDH"/>
    <property type="match status" value="1"/>
</dbReference>
<dbReference type="InterPro" id="IPR013785">
    <property type="entry name" value="Aldolase_TIM"/>
</dbReference>
<dbReference type="InterPro" id="IPR000644">
    <property type="entry name" value="CBS_dom"/>
</dbReference>
<dbReference type="InterPro" id="IPR005990">
    <property type="entry name" value="IMP_DH"/>
</dbReference>
<dbReference type="InterPro" id="IPR015875">
    <property type="entry name" value="IMP_DH/GMP_Rdtase_CS"/>
</dbReference>
<dbReference type="InterPro" id="IPR001093">
    <property type="entry name" value="IMP_DH_GMPRt"/>
</dbReference>
<dbReference type="NCBIfam" id="TIGR01302">
    <property type="entry name" value="IMP_dehydrog"/>
    <property type="match status" value="1"/>
</dbReference>
<dbReference type="PANTHER" id="PTHR11911:SF121">
    <property type="entry name" value="INOSINE-5'-MONOPHOSPHATE DEHYDROGENASE 2"/>
    <property type="match status" value="1"/>
</dbReference>
<dbReference type="PANTHER" id="PTHR11911">
    <property type="entry name" value="INOSINE-5-MONOPHOSPHATE DEHYDROGENASE RELATED"/>
    <property type="match status" value="1"/>
</dbReference>
<dbReference type="Pfam" id="PF00571">
    <property type="entry name" value="CBS"/>
    <property type="match status" value="2"/>
</dbReference>
<dbReference type="Pfam" id="PF00478">
    <property type="entry name" value="IMPDH"/>
    <property type="match status" value="1"/>
</dbReference>
<dbReference type="PIRSF" id="PIRSF000130">
    <property type="entry name" value="IMPDH"/>
    <property type="match status" value="1"/>
</dbReference>
<dbReference type="SMART" id="SM00116">
    <property type="entry name" value="CBS"/>
    <property type="match status" value="2"/>
</dbReference>
<dbReference type="SMART" id="SM01240">
    <property type="entry name" value="IMPDH"/>
    <property type="match status" value="1"/>
</dbReference>
<dbReference type="SUPFAM" id="SSF51412">
    <property type="entry name" value="Inosine monophosphate dehydrogenase (IMPDH)"/>
    <property type="match status" value="2"/>
</dbReference>
<dbReference type="PROSITE" id="PS51371">
    <property type="entry name" value="CBS"/>
    <property type="match status" value="2"/>
</dbReference>
<dbReference type="PROSITE" id="PS00487">
    <property type="entry name" value="IMP_DH_GMP_RED"/>
    <property type="match status" value="1"/>
</dbReference>
<organism>
    <name type="scientific">Xenopus tropicalis</name>
    <name type="common">Western clawed frog</name>
    <name type="synonym">Silurana tropicalis</name>
    <dbReference type="NCBI Taxonomy" id="8364"/>
    <lineage>
        <taxon>Eukaryota</taxon>
        <taxon>Metazoa</taxon>
        <taxon>Chordata</taxon>
        <taxon>Craniata</taxon>
        <taxon>Vertebrata</taxon>
        <taxon>Euteleostomi</taxon>
        <taxon>Amphibia</taxon>
        <taxon>Batrachia</taxon>
        <taxon>Anura</taxon>
        <taxon>Pipoidea</taxon>
        <taxon>Pipidae</taxon>
        <taxon>Xenopodinae</taxon>
        <taxon>Xenopus</taxon>
        <taxon>Silurana</taxon>
    </lineage>
</organism>
<accession>F7CYY5</accession>
<name>IMDH2_XENTR</name>
<proteinExistence type="inferred from homology"/>
<feature type="chain" id="PRO_0000415679" description="Inosine-5'-monophosphate dehydrogenase 2">
    <location>
        <begin position="1"/>
        <end position="515"/>
    </location>
</feature>
<feature type="domain" description="CBS 1" evidence="2">
    <location>
        <begin position="114"/>
        <end position="173"/>
    </location>
</feature>
<feature type="domain" description="CBS 2" evidence="2">
    <location>
        <begin position="179"/>
        <end position="238"/>
    </location>
</feature>
<feature type="active site" description="Thioimidate intermediate" evidence="2">
    <location>
        <position position="332"/>
    </location>
</feature>
<feature type="active site" description="Proton acceptor" evidence="2">
    <location>
        <position position="430"/>
    </location>
</feature>
<feature type="binding site" evidence="2">
    <location>
        <begin position="275"/>
        <end position="277"/>
    </location>
    <ligand>
        <name>NAD(+)</name>
        <dbReference type="ChEBI" id="CHEBI:57540"/>
    </ligand>
</feature>
<feature type="binding site" evidence="2">
    <location>
        <begin position="325"/>
        <end position="327"/>
    </location>
    <ligand>
        <name>NAD(+)</name>
        <dbReference type="ChEBI" id="CHEBI:57540"/>
    </ligand>
</feature>
<feature type="binding site" description="in other chain" evidence="2">
    <location>
        <position position="327"/>
    </location>
    <ligand>
        <name>K(+)</name>
        <dbReference type="ChEBI" id="CHEBI:29103"/>
        <note>ligand shared between two tetrameric partners</note>
    </ligand>
</feature>
<feature type="binding site" description="in other chain" evidence="2">
    <location>
        <position position="329"/>
    </location>
    <ligand>
        <name>K(+)</name>
        <dbReference type="ChEBI" id="CHEBI:29103"/>
        <note>ligand shared between two tetrameric partners</note>
    </ligand>
</feature>
<feature type="binding site" evidence="2">
    <location>
        <position position="330"/>
    </location>
    <ligand>
        <name>IMP</name>
        <dbReference type="ChEBI" id="CHEBI:58053"/>
    </ligand>
</feature>
<feature type="binding site" description="in other chain" evidence="2">
    <location>
        <position position="332"/>
    </location>
    <ligand>
        <name>K(+)</name>
        <dbReference type="ChEBI" id="CHEBI:29103"/>
        <note>ligand shared between two tetrameric partners</note>
    </ligand>
</feature>
<feature type="binding site" evidence="2">
    <location>
        <begin position="365"/>
        <end position="367"/>
    </location>
    <ligand>
        <name>IMP</name>
        <dbReference type="ChEBI" id="CHEBI:58053"/>
    </ligand>
</feature>
<feature type="binding site" evidence="2">
    <location>
        <begin position="388"/>
        <end position="389"/>
    </location>
    <ligand>
        <name>IMP</name>
        <dbReference type="ChEBI" id="CHEBI:58053"/>
    </ligand>
</feature>
<feature type="binding site" evidence="2">
    <location>
        <begin position="412"/>
        <end position="416"/>
    </location>
    <ligand>
        <name>IMP</name>
        <dbReference type="ChEBI" id="CHEBI:58053"/>
    </ligand>
</feature>
<feature type="binding site" evidence="2">
    <location>
        <position position="442"/>
    </location>
    <ligand>
        <name>IMP</name>
        <dbReference type="ChEBI" id="CHEBI:58053"/>
    </ligand>
</feature>
<feature type="binding site" evidence="2">
    <location>
        <position position="501"/>
    </location>
    <ligand>
        <name>K(+)</name>
        <dbReference type="ChEBI" id="CHEBI:29103"/>
        <note>ligand shared between two tetrameric partners</note>
    </ligand>
</feature>
<feature type="binding site" evidence="2">
    <location>
        <position position="502"/>
    </location>
    <ligand>
        <name>K(+)</name>
        <dbReference type="ChEBI" id="CHEBI:29103"/>
        <note>ligand shared between two tetrameric partners</note>
    </ligand>
</feature>
<feature type="binding site" evidence="2">
    <location>
        <position position="503"/>
    </location>
    <ligand>
        <name>K(+)</name>
        <dbReference type="ChEBI" id="CHEBI:29103"/>
        <note>ligand shared between two tetrameric partners</note>
    </ligand>
</feature>
<protein>
    <recommendedName>
        <fullName evidence="2">Inosine-5'-monophosphate dehydrogenase 2</fullName>
        <shortName evidence="2">IMP dehydrogenase 2</shortName>
        <shortName evidence="2">IMPD 2</shortName>
        <shortName evidence="2">IMPDH 2</shortName>
        <ecNumber evidence="1">1.1.1.205</ecNumber>
    </recommendedName>
</protein>
<gene>
    <name type="primary">impdh2</name>
</gene>
<evidence type="ECO:0000250" key="1">
    <source>
        <dbReference type="UniProtKB" id="P12268"/>
    </source>
</evidence>
<evidence type="ECO:0000255" key="2">
    <source>
        <dbReference type="HAMAP-Rule" id="MF_03156"/>
    </source>
</evidence>